<protein>
    <recommendedName>
        <fullName evidence="1">Acetyl-coenzyme A synthetase</fullName>
        <shortName evidence="1">AcCoA synthetase</shortName>
        <shortName evidence="1">Acs</shortName>
        <ecNumber evidence="1">6.2.1.1</ecNumber>
    </recommendedName>
    <alternativeName>
        <fullName evidence="1">Acetate--CoA ligase</fullName>
    </alternativeName>
    <alternativeName>
        <fullName evidence="1">Acyl-activating enzyme</fullName>
    </alternativeName>
</protein>
<evidence type="ECO:0000255" key="1">
    <source>
        <dbReference type="HAMAP-Rule" id="MF_01123"/>
    </source>
</evidence>
<proteinExistence type="inferred from homology"/>
<reference key="1">
    <citation type="journal article" date="2009" name="J. Bacteriol.">
        <title>Genome sequences of three Agrobacterium biovars help elucidate the evolution of multichromosome genomes in bacteria.</title>
        <authorList>
            <person name="Slater S.C."/>
            <person name="Goldman B.S."/>
            <person name="Goodner B."/>
            <person name="Setubal J.C."/>
            <person name="Farrand S.K."/>
            <person name="Nester E.W."/>
            <person name="Burr T.J."/>
            <person name="Banta L."/>
            <person name="Dickerman A.W."/>
            <person name="Paulsen I."/>
            <person name="Otten L."/>
            <person name="Suen G."/>
            <person name="Welch R."/>
            <person name="Almeida N.F."/>
            <person name="Arnold F."/>
            <person name="Burton O.T."/>
            <person name="Du Z."/>
            <person name="Ewing A."/>
            <person name="Godsy E."/>
            <person name="Heisel S."/>
            <person name="Houmiel K.L."/>
            <person name="Jhaveri J."/>
            <person name="Lu J."/>
            <person name="Miller N.M."/>
            <person name="Norton S."/>
            <person name="Chen Q."/>
            <person name="Phoolcharoen W."/>
            <person name="Ohlin V."/>
            <person name="Ondrusek D."/>
            <person name="Pride N."/>
            <person name="Stricklin S.L."/>
            <person name="Sun J."/>
            <person name="Wheeler C."/>
            <person name="Wilson L."/>
            <person name="Zhu H."/>
            <person name="Wood D.W."/>
        </authorList>
    </citation>
    <scope>NUCLEOTIDE SEQUENCE [LARGE SCALE GENOMIC DNA]</scope>
    <source>
        <strain>ATCC BAA-846 / DSM 112012 / S4</strain>
    </source>
</reference>
<feature type="chain" id="PRO_1000164047" description="Acetyl-coenzyme A synthetase">
    <location>
        <begin position="1"/>
        <end position="651"/>
    </location>
</feature>
<feature type="binding site" evidence="1">
    <location>
        <begin position="189"/>
        <end position="192"/>
    </location>
    <ligand>
        <name>CoA</name>
        <dbReference type="ChEBI" id="CHEBI:57287"/>
    </ligand>
</feature>
<feature type="binding site" evidence="1">
    <location>
        <position position="311"/>
    </location>
    <ligand>
        <name>CoA</name>
        <dbReference type="ChEBI" id="CHEBI:57287"/>
    </ligand>
</feature>
<feature type="binding site" evidence="1">
    <location>
        <position position="335"/>
    </location>
    <ligand>
        <name>CoA</name>
        <dbReference type="ChEBI" id="CHEBI:57287"/>
    </ligand>
</feature>
<feature type="binding site" evidence="1">
    <location>
        <begin position="387"/>
        <end position="389"/>
    </location>
    <ligand>
        <name>ATP</name>
        <dbReference type="ChEBI" id="CHEBI:30616"/>
    </ligand>
</feature>
<feature type="binding site" evidence="1">
    <location>
        <begin position="411"/>
        <end position="416"/>
    </location>
    <ligand>
        <name>ATP</name>
        <dbReference type="ChEBI" id="CHEBI:30616"/>
    </ligand>
</feature>
<feature type="binding site" evidence="1">
    <location>
        <position position="500"/>
    </location>
    <ligand>
        <name>ATP</name>
        <dbReference type="ChEBI" id="CHEBI:30616"/>
    </ligand>
</feature>
<feature type="binding site" evidence="1">
    <location>
        <position position="515"/>
    </location>
    <ligand>
        <name>ATP</name>
        <dbReference type="ChEBI" id="CHEBI:30616"/>
    </ligand>
</feature>
<feature type="binding site" evidence="1">
    <location>
        <position position="523"/>
    </location>
    <ligand>
        <name>CoA</name>
        <dbReference type="ChEBI" id="CHEBI:57287"/>
    </ligand>
</feature>
<feature type="binding site" evidence="1">
    <location>
        <position position="526"/>
    </location>
    <ligand>
        <name>ATP</name>
        <dbReference type="ChEBI" id="CHEBI:30616"/>
    </ligand>
</feature>
<feature type="binding site" evidence="1">
    <location>
        <position position="537"/>
    </location>
    <ligand>
        <name>Mg(2+)</name>
        <dbReference type="ChEBI" id="CHEBI:18420"/>
    </ligand>
</feature>
<feature type="binding site" evidence="1">
    <location>
        <position position="539"/>
    </location>
    <ligand>
        <name>Mg(2+)</name>
        <dbReference type="ChEBI" id="CHEBI:18420"/>
    </ligand>
</feature>
<feature type="binding site" evidence="1">
    <location>
        <position position="542"/>
    </location>
    <ligand>
        <name>Mg(2+)</name>
        <dbReference type="ChEBI" id="CHEBI:18420"/>
    </ligand>
</feature>
<feature type="binding site">
    <location>
        <position position="584"/>
    </location>
    <ligand>
        <name>CoA</name>
        <dbReference type="ChEBI" id="CHEBI:57287"/>
    </ligand>
</feature>
<feature type="modified residue" description="N6-acetyllysine" evidence="1">
    <location>
        <position position="609"/>
    </location>
</feature>
<sequence length="651" mass="72324">MSAKTYPVLKAAKAQALIDNDKYLKWYEESIEEPEKFWSKHGKRIDWFKPYTKAKNTSFKGKVPIKWFEDGLTNVSYNCIDRHLKTHGERTAIIWEGDNPYIDKRITYNQLYDNVCRLANVLKAHGVKKGDRVTIYMPMVPEATYAMLACSRIGAVHSVVFGGFSPEALAGRIVDCESTFVITCDEGVRGGKPVALKENTDVAIDIAAKQYVIVNKVLVVRRTGGKVGWAPGRDLWYHQEIAKVKPDCPPVKMKAEDPLFILYTSGSTGKPKGVLHTTGGYLVYAAMTHEYVFDYKDGEIFWCSADVGWVTGHSYIVYGPLANCATTVMFEGVPNFPDQGRFWEIIDKHKVNIFYTAPTAIRSLMGAGDDFVKRSSRSSLRLLGSVGEPINPEAWEWYYNVVGDQRCPIVDTWWQTETGGILISPLPGATDLKPGSATRPFFGVKPELVDNEGKVLEGAADGNLCLIDSWPGQARTIYGDHNRFVQTYFSTYKGKYFTGDGCRRDEDGYYWITGRVDDVLNVSGHRLGTAEVESALVSHHLVSEAAVVGYPHGIKGQGIYCYVTLMAGHEGNEELRQTLIKHVRSEIGPIASPDKVQFAPGLPKTRSGKIMRRILRKIAEDDFGALGDTSTLADPGVVDDLIANRQNKASA</sequence>
<accession>B9JV43</accession>
<organism>
    <name type="scientific">Allorhizobium ampelinum (strain ATCC BAA-846 / DSM 112012 / S4)</name>
    <name type="common">Agrobacterium vitis (strain S4)</name>
    <dbReference type="NCBI Taxonomy" id="311402"/>
    <lineage>
        <taxon>Bacteria</taxon>
        <taxon>Pseudomonadati</taxon>
        <taxon>Pseudomonadota</taxon>
        <taxon>Alphaproteobacteria</taxon>
        <taxon>Hyphomicrobiales</taxon>
        <taxon>Rhizobiaceae</taxon>
        <taxon>Rhizobium/Agrobacterium group</taxon>
        <taxon>Allorhizobium</taxon>
        <taxon>Allorhizobium ampelinum</taxon>
    </lineage>
</organism>
<keyword id="KW-0007">Acetylation</keyword>
<keyword id="KW-0067">ATP-binding</keyword>
<keyword id="KW-0436">Ligase</keyword>
<keyword id="KW-0460">Magnesium</keyword>
<keyword id="KW-0479">Metal-binding</keyword>
<keyword id="KW-0547">Nucleotide-binding</keyword>
<keyword id="KW-1185">Reference proteome</keyword>
<dbReference type="EC" id="6.2.1.1" evidence="1"/>
<dbReference type="EMBL" id="CP000633">
    <property type="protein sequence ID" value="ACM38181.1"/>
    <property type="molecule type" value="Genomic_DNA"/>
</dbReference>
<dbReference type="SMR" id="B9JV43"/>
<dbReference type="STRING" id="311402.Avi_4377"/>
<dbReference type="KEGG" id="avi:Avi_4377"/>
<dbReference type="eggNOG" id="COG0365">
    <property type="taxonomic scope" value="Bacteria"/>
</dbReference>
<dbReference type="HOGENOM" id="CLU_000022_3_6_5"/>
<dbReference type="Proteomes" id="UP000001596">
    <property type="component" value="Chromosome 1"/>
</dbReference>
<dbReference type="GO" id="GO:0005829">
    <property type="term" value="C:cytosol"/>
    <property type="evidence" value="ECO:0007669"/>
    <property type="project" value="TreeGrafter"/>
</dbReference>
<dbReference type="GO" id="GO:0003987">
    <property type="term" value="F:acetate-CoA ligase activity"/>
    <property type="evidence" value="ECO:0007669"/>
    <property type="project" value="UniProtKB-UniRule"/>
</dbReference>
<dbReference type="GO" id="GO:0016208">
    <property type="term" value="F:AMP binding"/>
    <property type="evidence" value="ECO:0007669"/>
    <property type="project" value="InterPro"/>
</dbReference>
<dbReference type="GO" id="GO:0005524">
    <property type="term" value="F:ATP binding"/>
    <property type="evidence" value="ECO:0007669"/>
    <property type="project" value="UniProtKB-KW"/>
</dbReference>
<dbReference type="GO" id="GO:0046872">
    <property type="term" value="F:metal ion binding"/>
    <property type="evidence" value="ECO:0007669"/>
    <property type="project" value="UniProtKB-KW"/>
</dbReference>
<dbReference type="GO" id="GO:0019427">
    <property type="term" value="P:acetyl-CoA biosynthetic process from acetate"/>
    <property type="evidence" value="ECO:0007669"/>
    <property type="project" value="InterPro"/>
</dbReference>
<dbReference type="CDD" id="cd05966">
    <property type="entry name" value="ACS"/>
    <property type="match status" value="1"/>
</dbReference>
<dbReference type="FunFam" id="3.30.300.30:FF:000004">
    <property type="entry name" value="Acetyl-coenzyme A synthetase"/>
    <property type="match status" value="1"/>
</dbReference>
<dbReference type="FunFam" id="3.40.50.12780:FF:000001">
    <property type="entry name" value="Acetyl-coenzyme A synthetase"/>
    <property type="match status" value="1"/>
</dbReference>
<dbReference type="Gene3D" id="3.30.300.30">
    <property type="match status" value="1"/>
</dbReference>
<dbReference type="Gene3D" id="3.40.50.12780">
    <property type="entry name" value="N-terminal domain of ligase-like"/>
    <property type="match status" value="1"/>
</dbReference>
<dbReference type="HAMAP" id="MF_01123">
    <property type="entry name" value="Ac_CoA_synth"/>
    <property type="match status" value="1"/>
</dbReference>
<dbReference type="InterPro" id="IPR011904">
    <property type="entry name" value="Ac_CoA_lig"/>
</dbReference>
<dbReference type="InterPro" id="IPR032387">
    <property type="entry name" value="ACAS_N"/>
</dbReference>
<dbReference type="InterPro" id="IPR025110">
    <property type="entry name" value="AMP-bd_C"/>
</dbReference>
<dbReference type="InterPro" id="IPR045851">
    <property type="entry name" value="AMP-bd_C_sf"/>
</dbReference>
<dbReference type="InterPro" id="IPR020845">
    <property type="entry name" value="AMP-binding_CS"/>
</dbReference>
<dbReference type="InterPro" id="IPR000873">
    <property type="entry name" value="AMP-dep_synth/lig_dom"/>
</dbReference>
<dbReference type="InterPro" id="IPR042099">
    <property type="entry name" value="ANL_N_sf"/>
</dbReference>
<dbReference type="NCBIfam" id="TIGR02188">
    <property type="entry name" value="Ac_CoA_lig_AcsA"/>
    <property type="match status" value="1"/>
</dbReference>
<dbReference type="NCBIfam" id="NF001208">
    <property type="entry name" value="PRK00174.1"/>
    <property type="match status" value="1"/>
</dbReference>
<dbReference type="PANTHER" id="PTHR24095">
    <property type="entry name" value="ACETYL-COENZYME A SYNTHETASE"/>
    <property type="match status" value="1"/>
</dbReference>
<dbReference type="PANTHER" id="PTHR24095:SF14">
    <property type="entry name" value="ACETYL-COENZYME A SYNTHETASE 1"/>
    <property type="match status" value="1"/>
</dbReference>
<dbReference type="Pfam" id="PF16177">
    <property type="entry name" value="ACAS_N"/>
    <property type="match status" value="1"/>
</dbReference>
<dbReference type="Pfam" id="PF00501">
    <property type="entry name" value="AMP-binding"/>
    <property type="match status" value="1"/>
</dbReference>
<dbReference type="Pfam" id="PF13193">
    <property type="entry name" value="AMP-binding_C"/>
    <property type="match status" value="1"/>
</dbReference>
<dbReference type="SUPFAM" id="SSF56801">
    <property type="entry name" value="Acetyl-CoA synthetase-like"/>
    <property type="match status" value="1"/>
</dbReference>
<dbReference type="PROSITE" id="PS00455">
    <property type="entry name" value="AMP_BINDING"/>
    <property type="match status" value="1"/>
</dbReference>
<name>ACSA_ALLAM</name>
<comment type="function">
    <text evidence="1">Catalyzes the conversion of acetate into acetyl-CoA (AcCoA), an essential intermediate at the junction of anabolic and catabolic pathways. AcsA undergoes a two-step reaction. In the first half reaction, AcsA combines acetate with ATP to form acetyl-adenylate (AcAMP) intermediate. In the second half reaction, it can then transfer the acetyl group from AcAMP to the sulfhydryl group of CoA, forming the product AcCoA.</text>
</comment>
<comment type="catalytic activity">
    <reaction evidence="1">
        <text>acetate + ATP + CoA = acetyl-CoA + AMP + diphosphate</text>
        <dbReference type="Rhea" id="RHEA:23176"/>
        <dbReference type="ChEBI" id="CHEBI:30089"/>
        <dbReference type="ChEBI" id="CHEBI:30616"/>
        <dbReference type="ChEBI" id="CHEBI:33019"/>
        <dbReference type="ChEBI" id="CHEBI:57287"/>
        <dbReference type="ChEBI" id="CHEBI:57288"/>
        <dbReference type="ChEBI" id="CHEBI:456215"/>
        <dbReference type="EC" id="6.2.1.1"/>
    </reaction>
</comment>
<comment type="cofactor">
    <cofactor evidence="1">
        <name>Mg(2+)</name>
        <dbReference type="ChEBI" id="CHEBI:18420"/>
    </cofactor>
</comment>
<comment type="PTM">
    <text evidence="1">Acetylated. Deacetylation by the SIR2-homolog deacetylase activates the enzyme.</text>
</comment>
<comment type="similarity">
    <text evidence="1">Belongs to the ATP-dependent AMP-binding enzyme family.</text>
</comment>
<gene>
    <name evidence="1" type="primary">acsA</name>
    <name type="ordered locus">Avi_4377</name>
</gene>